<accession>Q24372</accession>
<accession>Q86PE5</accession>
<accession>Q8ML12</accession>
<accession>Q9V6C2</accession>
<gene>
    <name type="primary">Lac</name>
    <name type="ORF">CG12369</name>
</gene>
<comment type="function">
    <text evidence="3 4">Required for normal tracheal development and maintenance of the trans-epithelial diffusion barrier. Functions as a homophilic cell-adhesion molecule. May play a role in early neuronal differentiation and axon outgrowth.</text>
</comment>
<comment type="interaction">
    <interactant intactId="EBI-221813">
        <id>Q24372</id>
    </interactant>
    <interactant intactId="EBI-6896902">
        <id>Q9VGH2</id>
        <label>6959</label>
    </interactant>
    <organismsDiffer>false</organismsDiffer>
    <experiments>2</experiments>
</comment>
<comment type="subcellular location">
    <subcellularLocation>
        <location evidence="3 4">Cell membrane</location>
        <topology evidence="3 4">Lipid-anchor</topology>
        <topology evidence="3 4">GPI-anchor</topology>
        <orientation evidence="3 4">Extracellular side</orientation>
    </subcellularLocation>
    <text>Located at the extracellular face of the membrane and becomes associated with septate junctions.</text>
</comment>
<comment type="tissue specificity">
    <text evidence="3">Expressed on differentiating neuronal cells from the onset of neurogenesis in both the central and peripheral nervous systems. First detected in the cellularized blastoderm, apart from in the ventral side. Expression persists uniformly in the early ectoderm until the end of gastrulation. From stage 10, expressed in an alternating strong/weak pattern in each segment until stage 15 when it disappears. From stage 11, expressed in subsets of neurons and later subsets of glial cells. From early stage 13, strongly expressed in trachea, hindgut, foregut and the nervous system.</text>
</comment>
<comment type="developmental stage">
    <text evidence="3 4">Expressed in embryos.</text>
</comment>
<comment type="disruption phenotype">
    <text evidence="3">Flies exhibit more sinuous tracheal branches and uneven lumen with numerous breaks in the dorsal and lateral branches.</text>
</comment>
<comment type="sequence caution" evidence="5">
    <conflict type="miscellaneous discrepancy">
        <sequence resource="EMBL-CDS" id="AAO24932"/>
    </conflict>
    <text>Probable cloning artifact.</text>
</comment>
<organism>
    <name type="scientific">Drosophila melanogaster</name>
    <name type="common">Fruit fly</name>
    <dbReference type="NCBI Taxonomy" id="7227"/>
    <lineage>
        <taxon>Eukaryota</taxon>
        <taxon>Metazoa</taxon>
        <taxon>Ecdysozoa</taxon>
        <taxon>Arthropoda</taxon>
        <taxon>Hexapoda</taxon>
        <taxon>Insecta</taxon>
        <taxon>Pterygota</taxon>
        <taxon>Neoptera</taxon>
        <taxon>Endopterygota</taxon>
        <taxon>Diptera</taxon>
        <taxon>Brachycera</taxon>
        <taxon>Muscomorpha</taxon>
        <taxon>Ephydroidea</taxon>
        <taxon>Drosophilidae</taxon>
        <taxon>Drosophila</taxon>
        <taxon>Sophophora</taxon>
    </lineage>
</organism>
<proteinExistence type="evidence at protein level"/>
<keyword id="KW-0130">Cell adhesion</keyword>
<keyword id="KW-1003">Cell membrane</keyword>
<keyword id="KW-0217">Developmental protein</keyword>
<keyword id="KW-1015">Disulfide bond</keyword>
<keyword id="KW-0325">Glycoprotein</keyword>
<keyword id="KW-0336">GPI-anchor</keyword>
<keyword id="KW-0393">Immunoglobulin domain</keyword>
<keyword id="KW-0449">Lipoprotein</keyword>
<keyword id="KW-0472">Membrane</keyword>
<keyword id="KW-1185">Reference proteome</keyword>
<keyword id="KW-0677">Repeat</keyword>
<keyword id="KW-0732">Signal</keyword>
<sequence length="359" mass="39939">MWRPSISNCVWSTLLLAIFVQQTLAQRTPTISYITQEQIKDIGGTVEFDCSVQYAKEYNVLFLKTDSDPVFLSTGSTLVIKDSRFSLRYDPNSSTYKLQIKDIQETDAGTYTCQVVISTVHKVSAEVKLSVRRPPVISDNSTQSVVASEGSEVQMECYASGYPTPTITWRRENNAILPTDSATYVGNTLRIKSVKKEDRGTYYCVADNGVSKGDRRNINVEVEFAPVITVPRPRLGQALQYDMDLECHIEAYPPPAIVWTKDDIQLANNQHYSISHFATADEYTDSTLRVITVEKRQYGDYVCKATNRFGEAEARVNLFETIIPVCPPACGQAYIAGAEDVSATSFALVGILAALLFAR</sequence>
<protein>
    <recommendedName>
        <fullName>Lachesin</fullName>
    </recommendedName>
</protein>
<name>LACH_DROME</name>
<feature type="signal peptide" evidence="1">
    <location>
        <begin position="1"/>
        <end position="25"/>
    </location>
</feature>
<feature type="chain" id="PRO_0000014810" description="Lachesin">
    <location>
        <begin position="26"/>
        <end position="336"/>
    </location>
</feature>
<feature type="propeptide" id="PRO_0000014811" description="Removed in mature form" evidence="1">
    <location>
        <begin position="337"/>
        <end position="359"/>
    </location>
</feature>
<feature type="domain" description="Ig-like V-type">
    <location>
        <begin position="29"/>
        <end position="130"/>
    </location>
</feature>
<feature type="domain" description="Ig-like C2-type 1">
    <location>
        <begin position="135"/>
        <end position="221"/>
    </location>
</feature>
<feature type="domain" description="Ig-like C2-type 2">
    <location>
        <begin position="226"/>
        <end position="317"/>
    </location>
</feature>
<feature type="lipid moiety-binding region" description="GPI-anchor amidated alanine" evidence="1">
    <location>
        <position position="336"/>
    </location>
</feature>
<feature type="glycosylation site" description="N-linked (GlcNAc...) asparagine" evidence="1">
    <location>
        <position position="92"/>
    </location>
</feature>
<feature type="glycosylation site" description="N-linked (GlcNAc...) asparagine" evidence="1">
    <location>
        <position position="140"/>
    </location>
</feature>
<feature type="disulfide bond" evidence="2">
    <location>
        <begin position="50"/>
        <end position="113"/>
    </location>
</feature>
<feature type="disulfide bond" evidence="2">
    <location>
        <begin position="157"/>
        <end position="204"/>
    </location>
</feature>
<feature type="disulfide bond" evidence="2">
    <location>
        <begin position="247"/>
        <end position="303"/>
    </location>
</feature>
<feature type="sequence conflict" description="In Ref. 5; AAO24932." evidence="5" ref="5">
    <original>D</original>
    <variation>Y</variation>
    <location>
        <position position="244"/>
    </location>
</feature>
<feature type="sequence conflict" description="In Ref. 1; AAC37184." evidence="5" ref="1">
    <original>L</original>
    <variation>S</variation>
    <location>
        <position position="352"/>
    </location>
</feature>
<feature type="sequence conflict" description="In Ref. 1; AAC37184." evidence="5" ref="1">
    <original>A</original>
    <variation>R</variation>
    <location>
        <position position="354"/>
    </location>
</feature>
<dbReference type="EMBL" id="L13255">
    <property type="protein sequence ID" value="AAC37184.1"/>
    <property type="molecule type" value="mRNA"/>
</dbReference>
<dbReference type="EMBL" id="AE013599">
    <property type="protein sequence ID" value="AAF58506.1"/>
    <property type="molecule type" value="Genomic_DNA"/>
</dbReference>
<dbReference type="EMBL" id="AY051829">
    <property type="protein sequence ID" value="AAK93253.1"/>
    <property type="molecule type" value="mRNA"/>
</dbReference>
<dbReference type="EMBL" id="BT003177">
    <property type="protein sequence ID" value="AAO24932.1"/>
    <property type="status" value="ALT_SEQ"/>
    <property type="molecule type" value="mRNA"/>
</dbReference>
<dbReference type="RefSeq" id="NP_523713.2">
    <property type="nucleotide sequence ID" value="NM_078989.3"/>
</dbReference>
<dbReference type="SMR" id="Q24372"/>
<dbReference type="BioGRID" id="62140">
    <property type="interactions" value="7"/>
</dbReference>
<dbReference type="FunCoup" id="Q24372">
    <property type="interactions" value="145"/>
</dbReference>
<dbReference type="IntAct" id="Q24372">
    <property type="interactions" value="36"/>
</dbReference>
<dbReference type="STRING" id="7227.FBpp0087044"/>
<dbReference type="TCDB" id="1.H.2.1.1">
    <property type="family name" value="the invertebrate pmp22-claudin (claudin2) family"/>
</dbReference>
<dbReference type="GlyCosmos" id="Q24372">
    <property type="glycosylation" value="2 sites, No reported glycans"/>
</dbReference>
<dbReference type="GlyGen" id="Q24372">
    <property type="glycosylation" value="2 sites"/>
</dbReference>
<dbReference type="PaxDb" id="7227-FBpp0087044"/>
<dbReference type="DNASU" id="36363"/>
<dbReference type="EnsemblMetazoa" id="FBtr0087933">
    <property type="protein sequence ID" value="FBpp0087044"/>
    <property type="gene ID" value="FBgn0010238"/>
</dbReference>
<dbReference type="GeneID" id="36363"/>
<dbReference type="KEGG" id="dme:Dmel_CG12369"/>
<dbReference type="AGR" id="FB:FBgn0010238"/>
<dbReference type="CTD" id="36363"/>
<dbReference type="FlyBase" id="FBgn0010238">
    <property type="gene designation" value="Lac"/>
</dbReference>
<dbReference type="VEuPathDB" id="VectorBase:FBgn0010238"/>
<dbReference type="eggNOG" id="KOG3510">
    <property type="taxonomic scope" value="Eukaryota"/>
</dbReference>
<dbReference type="GeneTree" id="ENSGT00940000174385"/>
<dbReference type="HOGENOM" id="CLU_027228_4_0_1"/>
<dbReference type="InParanoid" id="Q24372"/>
<dbReference type="OMA" id="LSCSVQY"/>
<dbReference type="OrthoDB" id="10010359at2759"/>
<dbReference type="PhylomeDB" id="Q24372"/>
<dbReference type="Reactome" id="R-DME-1474228">
    <property type="pathway name" value="Degradation of the extracellular matrix"/>
</dbReference>
<dbReference type="Reactome" id="R-DME-1971475">
    <property type="pathway name" value="A tetrasaccharide linker sequence is required for GAG synthesis"/>
</dbReference>
<dbReference type="Reactome" id="R-DME-2022928">
    <property type="pathway name" value="HS-GAG biosynthesis"/>
</dbReference>
<dbReference type="Reactome" id="R-DME-2024096">
    <property type="pathway name" value="HS-GAG degradation"/>
</dbReference>
<dbReference type="Reactome" id="R-DME-216083">
    <property type="pathway name" value="Integrin cell surface interactions"/>
</dbReference>
<dbReference type="Reactome" id="R-DME-3000171">
    <property type="pathway name" value="Non-integrin membrane-ECM interactions"/>
</dbReference>
<dbReference type="Reactome" id="R-DME-3000178">
    <property type="pathway name" value="ECM proteoglycans"/>
</dbReference>
<dbReference type="SignaLink" id="Q24372"/>
<dbReference type="BioGRID-ORCS" id="36363">
    <property type="hits" value="0 hits in 1 CRISPR screen"/>
</dbReference>
<dbReference type="GenomeRNAi" id="36363"/>
<dbReference type="PRO" id="PR:Q24372"/>
<dbReference type="Proteomes" id="UP000000803">
    <property type="component" value="Chromosome 2R"/>
</dbReference>
<dbReference type="Bgee" id="FBgn0010238">
    <property type="expression patterns" value="Expressed in second segment of antenna (Drosophila) and 192 other cell types or tissues"/>
</dbReference>
<dbReference type="ExpressionAtlas" id="Q24372">
    <property type="expression patterns" value="baseline and differential"/>
</dbReference>
<dbReference type="GO" id="GO:0043005">
    <property type="term" value="C:neuron projection"/>
    <property type="evidence" value="ECO:0000318"/>
    <property type="project" value="GO_Central"/>
</dbReference>
<dbReference type="GO" id="GO:0005886">
    <property type="term" value="C:plasma membrane"/>
    <property type="evidence" value="ECO:0007005"/>
    <property type="project" value="FlyBase"/>
</dbReference>
<dbReference type="GO" id="GO:0005918">
    <property type="term" value="C:septate junction"/>
    <property type="evidence" value="ECO:0000314"/>
    <property type="project" value="FlyBase"/>
</dbReference>
<dbReference type="GO" id="GO:0098552">
    <property type="term" value="C:side of membrane"/>
    <property type="evidence" value="ECO:0007669"/>
    <property type="project" value="UniProtKB-KW"/>
</dbReference>
<dbReference type="GO" id="GO:0042803">
    <property type="term" value="F:protein homodimerization activity"/>
    <property type="evidence" value="ECO:0000314"/>
    <property type="project" value="FlyBase"/>
</dbReference>
<dbReference type="GO" id="GO:0061343">
    <property type="term" value="P:cell adhesion involved in heart morphogenesis"/>
    <property type="evidence" value="ECO:0000315"/>
    <property type="project" value="FlyBase"/>
</dbReference>
<dbReference type="GO" id="GO:0007156">
    <property type="term" value="P:homophilic cell adhesion via plasma membrane adhesion molecules"/>
    <property type="evidence" value="ECO:0000314"/>
    <property type="project" value="FlyBase"/>
</dbReference>
<dbReference type="GO" id="GO:0035160">
    <property type="term" value="P:maintenance of epithelial integrity, open tracheal system"/>
    <property type="evidence" value="ECO:0000315"/>
    <property type="project" value="FlyBase"/>
</dbReference>
<dbReference type="GO" id="GO:0016331">
    <property type="term" value="P:morphogenesis of embryonic epithelium"/>
    <property type="evidence" value="ECO:0000315"/>
    <property type="project" value="FlyBase"/>
</dbReference>
<dbReference type="GO" id="GO:0007424">
    <property type="term" value="P:open tracheal system development"/>
    <property type="evidence" value="ECO:0000315"/>
    <property type="project" value="FlyBase"/>
</dbReference>
<dbReference type="GO" id="GO:0035151">
    <property type="term" value="P:regulation of tube size, open tracheal system"/>
    <property type="evidence" value="ECO:0000315"/>
    <property type="project" value="FlyBase"/>
</dbReference>
<dbReference type="GO" id="GO:0019991">
    <property type="term" value="P:septate junction assembly"/>
    <property type="evidence" value="ECO:0000315"/>
    <property type="project" value="FlyBase"/>
</dbReference>
<dbReference type="CDD" id="cd00096">
    <property type="entry name" value="Ig"/>
    <property type="match status" value="1"/>
</dbReference>
<dbReference type="FunFam" id="2.60.40.10:FF:002152">
    <property type="entry name" value="Lachesin"/>
    <property type="match status" value="1"/>
</dbReference>
<dbReference type="FunFam" id="2.60.40.10:FF:002153">
    <property type="entry name" value="Lachesin"/>
    <property type="match status" value="1"/>
</dbReference>
<dbReference type="FunFam" id="2.60.40.10:FF:000107">
    <property type="entry name" value="Myosin, light chain kinase a"/>
    <property type="match status" value="1"/>
</dbReference>
<dbReference type="Gene3D" id="2.60.40.10">
    <property type="entry name" value="Immunoglobulins"/>
    <property type="match status" value="3"/>
</dbReference>
<dbReference type="InterPro" id="IPR007110">
    <property type="entry name" value="Ig-like_dom"/>
</dbReference>
<dbReference type="InterPro" id="IPR036179">
    <property type="entry name" value="Ig-like_dom_sf"/>
</dbReference>
<dbReference type="InterPro" id="IPR013783">
    <property type="entry name" value="Ig-like_fold"/>
</dbReference>
<dbReference type="InterPro" id="IPR013098">
    <property type="entry name" value="Ig_I-set"/>
</dbReference>
<dbReference type="InterPro" id="IPR003599">
    <property type="entry name" value="Ig_sub"/>
</dbReference>
<dbReference type="InterPro" id="IPR003598">
    <property type="entry name" value="Ig_sub2"/>
</dbReference>
<dbReference type="InterPro" id="IPR013106">
    <property type="entry name" value="Ig_V-set"/>
</dbReference>
<dbReference type="InterPro" id="IPR051170">
    <property type="entry name" value="Neural/epithelial_adhesion"/>
</dbReference>
<dbReference type="PANTHER" id="PTHR12231">
    <property type="entry name" value="CTX-RELATED TYPE I TRANSMEMBRANE PROTEIN"/>
    <property type="match status" value="1"/>
</dbReference>
<dbReference type="PANTHER" id="PTHR12231:SF220">
    <property type="entry name" value="LACHESIN"/>
    <property type="match status" value="1"/>
</dbReference>
<dbReference type="Pfam" id="PF07679">
    <property type="entry name" value="I-set"/>
    <property type="match status" value="1"/>
</dbReference>
<dbReference type="Pfam" id="PF13927">
    <property type="entry name" value="Ig_3"/>
    <property type="match status" value="1"/>
</dbReference>
<dbReference type="Pfam" id="PF07686">
    <property type="entry name" value="V-set"/>
    <property type="match status" value="1"/>
</dbReference>
<dbReference type="SMART" id="SM00409">
    <property type="entry name" value="IG"/>
    <property type="match status" value="3"/>
</dbReference>
<dbReference type="SMART" id="SM00408">
    <property type="entry name" value="IGc2"/>
    <property type="match status" value="3"/>
</dbReference>
<dbReference type="SUPFAM" id="SSF48726">
    <property type="entry name" value="Immunoglobulin"/>
    <property type="match status" value="3"/>
</dbReference>
<dbReference type="PROSITE" id="PS50835">
    <property type="entry name" value="IG_LIKE"/>
    <property type="match status" value="3"/>
</dbReference>
<reference key="1">
    <citation type="journal article" date="1993" name="Development">
        <title>Lachesin: an immunoglobulin superfamily protein whose expression correlates with neurogenesis in grasshopper embryos.</title>
        <authorList>
            <person name="Karlstrom R.O."/>
            <person name="Wilder L.P."/>
            <person name="Bastiani M.J."/>
        </authorList>
    </citation>
    <scope>NUCLEOTIDE SEQUENCE [MRNA]</scope>
    <scope>FUNCTION</scope>
    <scope>SUBCELLULAR LOCATION</scope>
    <scope>DEVELOPMENTAL STAGE</scope>
    <source>
        <tissue>Embryo</tissue>
    </source>
</reference>
<reference key="2">
    <citation type="journal article" date="2000" name="Science">
        <title>The genome sequence of Drosophila melanogaster.</title>
        <authorList>
            <person name="Adams M.D."/>
            <person name="Celniker S.E."/>
            <person name="Holt R.A."/>
            <person name="Evans C.A."/>
            <person name="Gocayne J.D."/>
            <person name="Amanatides P.G."/>
            <person name="Scherer S.E."/>
            <person name="Li P.W."/>
            <person name="Hoskins R.A."/>
            <person name="Galle R.F."/>
            <person name="George R.A."/>
            <person name="Lewis S.E."/>
            <person name="Richards S."/>
            <person name="Ashburner M."/>
            <person name="Henderson S.N."/>
            <person name="Sutton G.G."/>
            <person name="Wortman J.R."/>
            <person name="Yandell M.D."/>
            <person name="Zhang Q."/>
            <person name="Chen L.X."/>
            <person name="Brandon R.C."/>
            <person name="Rogers Y.-H.C."/>
            <person name="Blazej R.G."/>
            <person name="Champe M."/>
            <person name="Pfeiffer B.D."/>
            <person name="Wan K.H."/>
            <person name="Doyle C."/>
            <person name="Baxter E.G."/>
            <person name="Helt G."/>
            <person name="Nelson C.R."/>
            <person name="Miklos G.L.G."/>
            <person name="Abril J.F."/>
            <person name="Agbayani A."/>
            <person name="An H.-J."/>
            <person name="Andrews-Pfannkoch C."/>
            <person name="Baldwin D."/>
            <person name="Ballew R.M."/>
            <person name="Basu A."/>
            <person name="Baxendale J."/>
            <person name="Bayraktaroglu L."/>
            <person name="Beasley E.M."/>
            <person name="Beeson K.Y."/>
            <person name="Benos P.V."/>
            <person name="Berman B.P."/>
            <person name="Bhandari D."/>
            <person name="Bolshakov S."/>
            <person name="Borkova D."/>
            <person name="Botchan M.R."/>
            <person name="Bouck J."/>
            <person name="Brokstein P."/>
            <person name="Brottier P."/>
            <person name="Burtis K.C."/>
            <person name="Busam D.A."/>
            <person name="Butler H."/>
            <person name="Cadieu E."/>
            <person name="Center A."/>
            <person name="Chandra I."/>
            <person name="Cherry J.M."/>
            <person name="Cawley S."/>
            <person name="Dahlke C."/>
            <person name="Davenport L.B."/>
            <person name="Davies P."/>
            <person name="de Pablos B."/>
            <person name="Delcher A."/>
            <person name="Deng Z."/>
            <person name="Mays A.D."/>
            <person name="Dew I."/>
            <person name="Dietz S.M."/>
            <person name="Dodson K."/>
            <person name="Doup L.E."/>
            <person name="Downes M."/>
            <person name="Dugan-Rocha S."/>
            <person name="Dunkov B.C."/>
            <person name="Dunn P."/>
            <person name="Durbin K.J."/>
            <person name="Evangelista C.C."/>
            <person name="Ferraz C."/>
            <person name="Ferriera S."/>
            <person name="Fleischmann W."/>
            <person name="Fosler C."/>
            <person name="Gabrielian A.E."/>
            <person name="Garg N.S."/>
            <person name="Gelbart W.M."/>
            <person name="Glasser K."/>
            <person name="Glodek A."/>
            <person name="Gong F."/>
            <person name="Gorrell J.H."/>
            <person name="Gu Z."/>
            <person name="Guan P."/>
            <person name="Harris M."/>
            <person name="Harris N.L."/>
            <person name="Harvey D.A."/>
            <person name="Heiman T.J."/>
            <person name="Hernandez J.R."/>
            <person name="Houck J."/>
            <person name="Hostin D."/>
            <person name="Houston K.A."/>
            <person name="Howland T.J."/>
            <person name="Wei M.-H."/>
            <person name="Ibegwam C."/>
            <person name="Jalali M."/>
            <person name="Kalush F."/>
            <person name="Karpen G.H."/>
            <person name="Ke Z."/>
            <person name="Kennison J.A."/>
            <person name="Ketchum K.A."/>
            <person name="Kimmel B.E."/>
            <person name="Kodira C.D."/>
            <person name="Kraft C.L."/>
            <person name="Kravitz S."/>
            <person name="Kulp D."/>
            <person name="Lai Z."/>
            <person name="Lasko P."/>
            <person name="Lei Y."/>
            <person name="Levitsky A.A."/>
            <person name="Li J.H."/>
            <person name="Li Z."/>
            <person name="Liang Y."/>
            <person name="Lin X."/>
            <person name="Liu X."/>
            <person name="Mattei B."/>
            <person name="McIntosh T.C."/>
            <person name="McLeod M.P."/>
            <person name="McPherson D."/>
            <person name="Merkulov G."/>
            <person name="Milshina N.V."/>
            <person name="Mobarry C."/>
            <person name="Morris J."/>
            <person name="Moshrefi A."/>
            <person name="Mount S.M."/>
            <person name="Moy M."/>
            <person name="Murphy B."/>
            <person name="Murphy L."/>
            <person name="Muzny D.M."/>
            <person name="Nelson D.L."/>
            <person name="Nelson D.R."/>
            <person name="Nelson K.A."/>
            <person name="Nixon K."/>
            <person name="Nusskern D.R."/>
            <person name="Pacleb J.M."/>
            <person name="Palazzolo M."/>
            <person name="Pittman G.S."/>
            <person name="Pan S."/>
            <person name="Pollard J."/>
            <person name="Puri V."/>
            <person name="Reese M.G."/>
            <person name="Reinert K."/>
            <person name="Remington K."/>
            <person name="Saunders R.D.C."/>
            <person name="Scheeler F."/>
            <person name="Shen H."/>
            <person name="Shue B.C."/>
            <person name="Siden-Kiamos I."/>
            <person name="Simpson M."/>
            <person name="Skupski M.P."/>
            <person name="Smith T.J."/>
            <person name="Spier E."/>
            <person name="Spradling A.C."/>
            <person name="Stapleton M."/>
            <person name="Strong R."/>
            <person name="Sun E."/>
            <person name="Svirskas R."/>
            <person name="Tector C."/>
            <person name="Turner R."/>
            <person name="Venter E."/>
            <person name="Wang A.H."/>
            <person name="Wang X."/>
            <person name="Wang Z.-Y."/>
            <person name="Wassarman D.A."/>
            <person name="Weinstock G.M."/>
            <person name="Weissenbach J."/>
            <person name="Williams S.M."/>
            <person name="Woodage T."/>
            <person name="Worley K.C."/>
            <person name="Wu D."/>
            <person name="Yang S."/>
            <person name="Yao Q.A."/>
            <person name="Ye J."/>
            <person name="Yeh R.-F."/>
            <person name="Zaveri J.S."/>
            <person name="Zhan M."/>
            <person name="Zhang G."/>
            <person name="Zhao Q."/>
            <person name="Zheng L."/>
            <person name="Zheng X.H."/>
            <person name="Zhong F.N."/>
            <person name="Zhong W."/>
            <person name="Zhou X."/>
            <person name="Zhu S.C."/>
            <person name="Zhu X."/>
            <person name="Smith H.O."/>
            <person name="Gibbs R.A."/>
            <person name="Myers E.W."/>
            <person name="Rubin G.M."/>
            <person name="Venter J.C."/>
        </authorList>
    </citation>
    <scope>NUCLEOTIDE SEQUENCE [LARGE SCALE GENOMIC DNA]</scope>
    <source>
        <strain>Berkeley</strain>
    </source>
</reference>
<reference key="3">
    <citation type="journal article" date="2002" name="Genome Biol.">
        <title>Annotation of the Drosophila melanogaster euchromatic genome: a systematic review.</title>
        <authorList>
            <person name="Misra S."/>
            <person name="Crosby M.A."/>
            <person name="Mungall C.J."/>
            <person name="Matthews B.B."/>
            <person name="Campbell K.S."/>
            <person name="Hradecky P."/>
            <person name="Huang Y."/>
            <person name="Kaminker J.S."/>
            <person name="Millburn G.H."/>
            <person name="Prochnik S.E."/>
            <person name="Smith C.D."/>
            <person name="Tupy J.L."/>
            <person name="Whitfield E.J."/>
            <person name="Bayraktaroglu L."/>
            <person name="Berman B.P."/>
            <person name="Bettencourt B.R."/>
            <person name="Celniker S.E."/>
            <person name="de Grey A.D.N.J."/>
            <person name="Drysdale R.A."/>
            <person name="Harris N.L."/>
            <person name="Richter J."/>
            <person name="Russo S."/>
            <person name="Schroeder A.J."/>
            <person name="Shu S.Q."/>
            <person name="Stapleton M."/>
            <person name="Yamada C."/>
            <person name="Ashburner M."/>
            <person name="Gelbart W.M."/>
            <person name="Rubin G.M."/>
            <person name="Lewis S.E."/>
        </authorList>
    </citation>
    <scope>GENOME REANNOTATION</scope>
    <source>
        <strain>Berkeley</strain>
    </source>
</reference>
<reference key="4">
    <citation type="journal article" date="2002" name="Genome Biol.">
        <title>A Drosophila full-length cDNA resource.</title>
        <authorList>
            <person name="Stapleton M."/>
            <person name="Carlson J.W."/>
            <person name="Brokstein P."/>
            <person name="Yu C."/>
            <person name="Champe M."/>
            <person name="George R.A."/>
            <person name="Guarin H."/>
            <person name="Kronmiller B."/>
            <person name="Pacleb J.M."/>
            <person name="Park S."/>
            <person name="Wan K.H."/>
            <person name="Rubin G.M."/>
            <person name="Celniker S.E."/>
        </authorList>
    </citation>
    <scope>PARTIAL NUCLEOTIDE SEQUENCE [LARGE SCALE MRNA]</scope>
    <source>
        <strain>Berkeley</strain>
        <tissue>Embryo</tissue>
    </source>
</reference>
<reference key="5">
    <citation type="submission" date="2003-01" db="EMBL/GenBank/DDBJ databases">
        <authorList>
            <person name="Stapleton M."/>
            <person name="Brokstein P."/>
            <person name="Hong L."/>
            <person name="Agbayani A."/>
            <person name="Carlson J.W."/>
            <person name="Champe M."/>
            <person name="Chavez C."/>
            <person name="Dorsett V."/>
            <person name="Dresnek D."/>
            <person name="Farfan D."/>
            <person name="Frise E."/>
            <person name="George R.A."/>
            <person name="Gonzalez M."/>
            <person name="Guarin H."/>
            <person name="Kronmiller B."/>
            <person name="Li P.W."/>
            <person name="Liao G."/>
            <person name="Miranda A."/>
            <person name="Mungall C.J."/>
            <person name="Nunoo J."/>
            <person name="Pacleb J.M."/>
            <person name="Paragas V."/>
            <person name="Park S."/>
            <person name="Patel S."/>
            <person name="Phouanenavong S."/>
            <person name="Wan K.H."/>
            <person name="Yu C."/>
            <person name="Lewis S.E."/>
            <person name="Rubin G.M."/>
            <person name="Celniker S.E."/>
        </authorList>
    </citation>
    <scope>NUCLEOTIDE SEQUENCE [LARGE SCALE MRNA]</scope>
    <source>
        <strain>Berkeley</strain>
        <tissue>Head</tissue>
    </source>
</reference>
<reference key="6">
    <citation type="journal article" date="2004" name="Development">
        <title>Lachesin is a component of a septate junction-based mechanism that controls tube size and epithelial integrity in the Drosophila tracheal system.</title>
        <authorList>
            <person name="Llimargas M."/>
            <person name="Strigini M."/>
            <person name="Katidou M."/>
            <person name="Karagogeos D."/>
            <person name="Casanova J."/>
        </authorList>
    </citation>
    <scope>FUNCTION</scope>
    <scope>TISSUE SPECIFICITY</scope>
    <scope>SUBCELLULAR LOCATION</scope>
    <scope>DEVELOPMENTAL STAGE</scope>
    <scope>DISRUPTION PHENOTYPE</scope>
</reference>
<evidence type="ECO:0000255" key="1"/>
<evidence type="ECO:0000255" key="2">
    <source>
        <dbReference type="PROSITE-ProRule" id="PRU00114"/>
    </source>
</evidence>
<evidence type="ECO:0000269" key="3">
    <source>
    </source>
</evidence>
<evidence type="ECO:0000269" key="4">
    <source>
    </source>
</evidence>
<evidence type="ECO:0000305" key="5"/>